<proteinExistence type="inferred from homology"/>
<keyword id="KW-0030">Aminoacyl-tRNA synthetase</keyword>
<keyword id="KW-0067">ATP-binding</keyword>
<keyword id="KW-0963">Cytoplasm</keyword>
<keyword id="KW-0436">Ligase</keyword>
<keyword id="KW-0547">Nucleotide-binding</keyword>
<keyword id="KW-0648">Protein biosynthesis</keyword>
<comment type="function">
    <text evidence="1">Catalyzes the attachment of proline to tRNA(Pro) in a two-step reaction: proline is first activated by ATP to form Pro-AMP and then transferred to the acceptor end of tRNA(Pro).</text>
</comment>
<comment type="catalytic activity">
    <reaction evidence="1">
        <text>tRNA(Pro) + L-proline + ATP = L-prolyl-tRNA(Pro) + AMP + diphosphate</text>
        <dbReference type="Rhea" id="RHEA:14305"/>
        <dbReference type="Rhea" id="RHEA-COMP:9700"/>
        <dbReference type="Rhea" id="RHEA-COMP:9702"/>
        <dbReference type="ChEBI" id="CHEBI:30616"/>
        <dbReference type="ChEBI" id="CHEBI:33019"/>
        <dbReference type="ChEBI" id="CHEBI:60039"/>
        <dbReference type="ChEBI" id="CHEBI:78442"/>
        <dbReference type="ChEBI" id="CHEBI:78532"/>
        <dbReference type="ChEBI" id="CHEBI:456215"/>
        <dbReference type="EC" id="6.1.1.15"/>
    </reaction>
</comment>
<comment type="subunit">
    <text evidence="1">Homodimer.</text>
</comment>
<comment type="subcellular location">
    <subcellularLocation>
        <location evidence="1">Cytoplasm</location>
    </subcellularLocation>
</comment>
<comment type="similarity">
    <text evidence="1">Belongs to the class-II aminoacyl-tRNA synthetase family. ProS type 2 subfamily.</text>
</comment>
<gene>
    <name evidence="1" type="primary">proS</name>
    <name type="ordered locus">RPE_2544</name>
</gene>
<name>SYP_RHOP5</name>
<sequence>MRLSRYFLPILKETPKEAEIVSHRLMLRAGMLRQEAAGIYAWLPLGHRVLKKIEQIVREEQNRAGAIELLMPTLQLADLWRESGRYDAYGPEMLRIADRHKRELLYGPTNEEMITEIFRAYVKSYKSLPLNLYHIQWKFRDEQRPRFGVMRGREFLMKDAYSFDIDEAAARRAYNRMFVAYLRTFARMGLKAIPMRAETGPIGGDLSHEFIVLAETGESAVYCDSEVLNLPVPGEDVDYDGDLTPIIKQWTSVYAATEDVHEAERFDREVPAERKLHTRGIEVGQIFYFGTKYSEAMKALVAGPDGVEVPIHGGSYGVGVSRLLGAIIEACHDENGIKWPEAVAPFRAAILNLKQGAAETDAACEQLYRELIAKGVDVLYDDTDQRAGAKFATADLIGIPWQILVGPKGLADGTVELKRRADGSRENVALAEAVARLTQ</sequence>
<feature type="chain" id="PRO_0000288400" description="Proline--tRNA ligase">
    <location>
        <begin position="1"/>
        <end position="439"/>
    </location>
</feature>
<dbReference type="EC" id="6.1.1.15" evidence="1"/>
<dbReference type="EMBL" id="CP000463">
    <property type="protein sequence ID" value="ABJ06482.1"/>
    <property type="molecule type" value="Genomic_DNA"/>
</dbReference>
<dbReference type="SMR" id="Q07NK2"/>
<dbReference type="STRING" id="316055.RPE_2544"/>
<dbReference type="KEGG" id="rpe:RPE_2544"/>
<dbReference type="eggNOG" id="COG0442">
    <property type="taxonomic scope" value="Bacteria"/>
</dbReference>
<dbReference type="HOGENOM" id="CLU_016739_4_2_5"/>
<dbReference type="OrthoDB" id="9809052at2"/>
<dbReference type="GO" id="GO:0005829">
    <property type="term" value="C:cytosol"/>
    <property type="evidence" value="ECO:0007669"/>
    <property type="project" value="TreeGrafter"/>
</dbReference>
<dbReference type="GO" id="GO:0005524">
    <property type="term" value="F:ATP binding"/>
    <property type="evidence" value="ECO:0007669"/>
    <property type="project" value="UniProtKB-UniRule"/>
</dbReference>
<dbReference type="GO" id="GO:0004827">
    <property type="term" value="F:proline-tRNA ligase activity"/>
    <property type="evidence" value="ECO:0007669"/>
    <property type="project" value="UniProtKB-UniRule"/>
</dbReference>
<dbReference type="GO" id="GO:0006433">
    <property type="term" value="P:prolyl-tRNA aminoacylation"/>
    <property type="evidence" value="ECO:0007669"/>
    <property type="project" value="UniProtKB-UniRule"/>
</dbReference>
<dbReference type="CDD" id="cd00861">
    <property type="entry name" value="ProRS_anticodon_short"/>
    <property type="match status" value="1"/>
</dbReference>
<dbReference type="CDD" id="cd00779">
    <property type="entry name" value="ProRS_core_prok"/>
    <property type="match status" value="1"/>
</dbReference>
<dbReference type="FunFam" id="3.30.930.10:FF:000042">
    <property type="entry name" value="probable proline--tRNA ligase, mitochondrial"/>
    <property type="match status" value="1"/>
</dbReference>
<dbReference type="FunFam" id="3.40.50.800:FF:000032">
    <property type="entry name" value="Proline--tRNA ligase"/>
    <property type="match status" value="1"/>
</dbReference>
<dbReference type="Gene3D" id="3.40.50.800">
    <property type="entry name" value="Anticodon-binding domain"/>
    <property type="match status" value="1"/>
</dbReference>
<dbReference type="Gene3D" id="3.30.930.10">
    <property type="entry name" value="Bira Bifunctional Protein, Domain 2"/>
    <property type="match status" value="1"/>
</dbReference>
<dbReference type="HAMAP" id="MF_01570">
    <property type="entry name" value="Pro_tRNA_synth_type2"/>
    <property type="match status" value="1"/>
</dbReference>
<dbReference type="InterPro" id="IPR002314">
    <property type="entry name" value="aa-tRNA-synt_IIb"/>
</dbReference>
<dbReference type="InterPro" id="IPR006195">
    <property type="entry name" value="aa-tRNA-synth_II"/>
</dbReference>
<dbReference type="InterPro" id="IPR045864">
    <property type="entry name" value="aa-tRNA-synth_II/BPL/LPL"/>
</dbReference>
<dbReference type="InterPro" id="IPR004154">
    <property type="entry name" value="Anticodon-bd"/>
</dbReference>
<dbReference type="InterPro" id="IPR036621">
    <property type="entry name" value="Anticodon-bd_dom_sf"/>
</dbReference>
<dbReference type="InterPro" id="IPR002316">
    <property type="entry name" value="Pro-tRNA-ligase_IIa"/>
</dbReference>
<dbReference type="InterPro" id="IPR004500">
    <property type="entry name" value="Pro-tRNA-synth_IIa_bac-type"/>
</dbReference>
<dbReference type="InterPro" id="IPR050062">
    <property type="entry name" value="Pro-tRNA_synthetase"/>
</dbReference>
<dbReference type="InterPro" id="IPR023716">
    <property type="entry name" value="Prolyl-tRNA_ligase_IIa_type2"/>
</dbReference>
<dbReference type="InterPro" id="IPR044140">
    <property type="entry name" value="ProRS_anticodon_short"/>
</dbReference>
<dbReference type="InterPro" id="IPR033730">
    <property type="entry name" value="ProRS_core_prok"/>
</dbReference>
<dbReference type="NCBIfam" id="NF008979">
    <property type="entry name" value="PRK12325.1"/>
    <property type="match status" value="1"/>
</dbReference>
<dbReference type="NCBIfam" id="TIGR00409">
    <property type="entry name" value="proS_fam_II"/>
    <property type="match status" value="1"/>
</dbReference>
<dbReference type="PANTHER" id="PTHR42753">
    <property type="entry name" value="MITOCHONDRIAL RIBOSOME PROTEIN L39/PROLYL-TRNA LIGASE FAMILY MEMBER"/>
    <property type="match status" value="1"/>
</dbReference>
<dbReference type="PANTHER" id="PTHR42753:SF2">
    <property type="entry name" value="PROLINE--TRNA LIGASE"/>
    <property type="match status" value="1"/>
</dbReference>
<dbReference type="Pfam" id="PF03129">
    <property type="entry name" value="HGTP_anticodon"/>
    <property type="match status" value="1"/>
</dbReference>
<dbReference type="Pfam" id="PF00587">
    <property type="entry name" value="tRNA-synt_2b"/>
    <property type="match status" value="1"/>
</dbReference>
<dbReference type="PRINTS" id="PR01046">
    <property type="entry name" value="TRNASYNTHPRO"/>
</dbReference>
<dbReference type="SUPFAM" id="SSF52954">
    <property type="entry name" value="Class II aaRS ABD-related"/>
    <property type="match status" value="1"/>
</dbReference>
<dbReference type="SUPFAM" id="SSF55681">
    <property type="entry name" value="Class II aaRS and biotin synthetases"/>
    <property type="match status" value="1"/>
</dbReference>
<dbReference type="PROSITE" id="PS50862">
    <property type="entry name" value="AA_TRNA_LIGASE_II"/>
    <property type="match status" value="1"/>
</dbReference>
<organism>
    <name type="scientific">Rhodopseudomonas palustris (strain BisA53)</name>
    <dbReference type="NCBI Taxonomy" id="316055"/>
    <lineage>
        <taxon>Bacteria</taxon>
        <taxon>Pseudomonadati</taxon>
        <taxon>Pseudomonadota</taxon>
        <taxon>Alphaproteobacteria</taxon>
        <taxon>Hyphomicrobiales</taxon>
        <taxon>Nitrobacteraceae</taxon>
        <taxon>Rhodopseudomonas</taxon>
    </lineage>
</organism>
<evidence type="ECO:0000255" key="1">
    <source>
        <dbReference type="HAMAP-Rule" id="MF_01570"/>
    </source>
</evidence>
<protein>
    <recommendedName>
        <fullName evidence="1">Proline--tRNA ligase</fullName>
        <ecNumber evidence="1">6.1.1.15</ecNumber>
    </recommendedName>
    <alternativeName>
        <fullName evidence="1">Prolyl-tRNA synthetase</fullName>
        <shortName evidence="1">ProRS</shortName>
    </alternativeName>
</protein>
<reference key="1">
    <citation type="submission" date="2006-09" db="EMBL/GenBank/DDBJ databases">
        <title>Complete sequence of Rhodopseudomonas palustris BisA53.</title>
        <authorList>
            <consortium name="US DOE Joint Genome Institute"/>
            <person name="Copeland A."/>
            <person name="Lucas S."/>
            <person name="Lapidus A."/>
            <person name="Barry K."/>
            <person name="Detter J.C."/>
            <person name="Glavina del Rio T."/>
            <person name="Hammon N."/>
            <person name="Israni S."/>
            <person name="Dalin E."/>
            <person name="Tice H."/>
            <person name="Pitluck S."/>
            <person name="Chain P."/>
            <person name="Malfatti S."/>
            <person name="Shin M."/>
            <person name="Vergez L."/>
            <person name="Schmutz J."/>
            <person name="Larimer F."/>
            <person name="Land M."/>
            <person name="Hauser L."/>
            <person name="Pelletier D.A."/>
            <person name="Kyrpides N."/>
            <person name="Kim E."/>
            <person name="Harwood C.S."/>
            <person name="Oda Y."/>
            <person name="Richardson P."/>
        </authorList>
    </citation>
    <scope>NUCLEOTIDE SEQUENCE [LARGE SCALE GENOMIC DNA]</scope>
    <source>
        <strain>BisA53</strain>
    </source>
</reference>
<accession>Q07NK2</accession>